<sequence>MKILICNDDGYQASGIIALYEALKIVADVEVVAPEQNNSAKSNALTLHSPMYVQTAANGFRYINGTPADCVHIALTGLLGYRPDLVVSGINNGANMGDDTIYSGTVGAAMEGYLFGIPSIAFSQTEKGWAHIDVAARRARELVEQLMPSLEVVAEGAQPALAPWLLNVNIPNLPDDQIQGVKVARLGRRHAAERVITQTSPRGETMYWIGGAGPAKEAGEGTDFYATSQKFVSITPLHVDLTDHERLPYWEQAAARLTQAH</sequence>
<protein>
    <recommendedName>
        <fullName evidence="1">5'-nucleotidase SurE</fullName>
        <ecNumber evidence="1">3.1.3.5</ecNumber>
    </recommendedName>
    <alternativeName>
        <fullName evidence="1">Nucleoside 5'-monophosphate phosphohydrolase</fullName>
    </alternativeName>
</protein>
<reference key="1">
    <citation type="journal article" date="2008" name="Appl. Environ. Microbiol.">
        <title>The genome of Polaromonas sp. strain JS666: insights into the evolution of a hydrocarbon- and xenobiotic-degrading bacterium, and features of relevance to biotechnology.</title>
        <authorList>
            <person name="Mattes T.E."/>
            <person name="Alexander A.K."/>
            <person name="Richardson P.M."/>
            <person name="Munk A.C."/>
            <person name="Han C.S."/>
            <person name="Stothard P."/>
            <person name="Coleman N.V."/>
        </authorList>
    </citation>
    <scope>NUCLEOTIDE SEQUENCE [LARGE SCALE GENOMIC DNA]</scope>
    <source>
        <strain>JS666 / ATCC BAA-500</strain>
    </source>
</reference>
<accession>Q128R7</accession>
<keyword id="KW-0963">Cytoplasm</keyword>
<keyword id="KW-0378">Hydrolase</keyword>
<keyword id="KW-0479">Metal-binding</keyword>
<keyword id="KW-0547">Nucleotide-binding</keyword>
<keyword id="KW-1185">Reference proteome</keyword>
<comment type="function">
    <text evidence="1">Nucleotidase that shows phosphatase activity on nucleoside 5'-monophosphates.</text>
</comment>
<comment type="catalytic activity">
    <reaction evidence="1">
        <text>a ribonucleoside 5'-phosphate + H2O = a ribonucleoside + phosphate</text>
        <dbReference type="Rhea" id="RHEA:12484"/>
        <dbReference type="ChEBI" id="CHEBI:15377"/>
        <dbReference type="ChEBI" id="CHEBI:18254"/>
        <dbReference type="ChEBI" id="CHEBI:43474"/>
        <dbReference type="ChEBI" id="CHEBI:58043"/>
        <dbReference type="EC" id="3.1.3.5"/>
    </reaction>
</comment>
<comment type="cofactor">
    <cofactor evidence="1">
        <name>a divalent metal cation</name>
        <dbReference type="ChEBI" id="CHEBI:60240"/>
    </cofactor>
    <text evidence="1">Binds 1 divalent metal cation per subunit.</text>
</comment>
<comment type="subcellular location">
    <subcellularLocation>
        <location evidence="1">Cytoplasm</location>
    </subcellularLocation>
</comment>
<comment type="similarity">
    <text evidence="1">Belongs to the SurE nucleotidase family.</text>
</comment>
<gene>
    <name evidence="1" type="primary">surE</name>
    <name type="ordered locus">Bpro_3061</name>
</gene>
<name>SURE_POLSJ</name>
<proteinExistence type="inferred from homology"/>
<organism>
    <name type="scientific">Polaromonas sp. (strain JS666 / ATCC BAA-500)</name>
    <dbReference type="NCBI Taxonomy" id="296591"/>
    <lineage>
        <taxon>Bacteria</taxon>
        <taxon>Pseudomonadati</taxon>
        <taxon>Pseudomonadota</taxon>
        <taxon>Betaproteobacteria</taxon>
        <taxon>Burkholderiales</taxon>
        <taxon>Comamonadaceae</taxon>
        <taxon>Polaromonas</taxon>
    </lineage>
</organism>
<evidence type="ECO:0000255" key="1">
    <source>
        <dbReference type="HAMAP-Rule" id="MF_00060"/>
    </source>
</evidence>
<dbReference type="EC" id="3.1.3.5" evidence="1"/>
<dbReference type="EMBL" id="CP000316">
    <property type="protein sequence ID" value="ABE44975.1"/>
    <property type="molecule type" value="Genomic_DNA"/>
</dbReference>
<dbReference type="RefSeq" id="WP_011483972.1">
    <property type="nucleotide sequence ID" value="NC_007948.1"/>
</dbReference>
<dbReference type="SMR" id="Q128R7"/>
<dbReference type="STRING" id="296591.Bpro_3061"/>
<dbReference type="KEGG" id="pol:Bpro_3061"/>
<dbReference type="eggNOG" id="COG0496">
    <property type="taxonomic scope" value="Bacteria"/>
</dbReference>
<dbReference type="HOGENOM" id="CLU_045192_1_2_4"/>
<dbReference type="OrthoDB" id="9780815at2"/>
<dbReference type="Proteomes" id="UP000001983">
    <property type="component" value="Chromosome"/>
</dbReference>
<dbReference type="GO" id="GO:0005737">
    <property type="term" value="C:cytoplasm"/>
    <property type="evidence" value="ECO:0007669"/>
    <property type="project" value="UniProtKB-SubCell"/>
</dbReference>
<dbReference type="GO" id="GO:0008254">
    <property type="term" value="F:3'-nucleotidase activity"/>
    <property type="evidence" value="ECO:0007669"/>
    <property type="project" value="TreeGrafter"/>
</dbReference>
<dbReference type="GO" id="GO:0008253">
    <property type="term" value="F:5'-nucleotidase activity"/>
    <property type="evidence" value="ECO:0007669"/>
    <property type="project" value="UniProtKB-UniRule"/>
</dbReference>
<dbReference type="GO" id="GO:0004309">
    <property type="term" value="F:exopolyphosphatase activity"/>
    <property type="evidence" value="ECO:0007669"/>
    <property type="project" value="TreeGrafter"/>
</dbReference>
<dbReference type="GO" id="GO:0046872">
    <property type="term" value="F:metal ion binding"/>
    <property type="evidence" value="ECO:0007669"/>
    <property type="project" value="UniProtKB-UniRule"/>
</dbReference>
<dbReference type="GO" id="GO:0000166">
    <property type="term" value="F:nucleotide binding"/>
    <property type="evidence" value="ECO:0007669"/>
    <property type="project" value="UniProtKB-KW"/>
</dbReference>
<dbReference type="FunFam" id="3.40.1210.10:FF:000001">
    <property type="entry name" value="5'/3'-nucleotidase SurE"/>
    <property type="match status" value="1"/>
</dbReference>
<dbReference type="Gene3D" id="3.40.1210.10">
    <property type="entry name" value="Survival protein SurE-like phosphatase/nucleotidase"/>
    <property type="match status" value="1"/>
</dbReference>
<dbReference type="HAMAP" id="MF_00060">
    <property type="entry name" value="SurE"/>
    <property type="match status" value="1"/>
</dbReference>
<dbReference type="InterPro" id="IPR030048">
    <property type="entry name" value="SurE"/>
</dbReference>
<dbReference type="InterPro" id="IPR002828">
    <property type="entry name" value="SurE-like_Pase/nucleotidase"/>
</dbReference>
<dbReference type="InterPro" id="IPR036523">
    <property type="entry name" value="SurE-like_sf"/>
</dbReference>
<dbReference type="NCBIfam" id="NF001489">
    <property type="entry name" value="PRK00346.1-3"/>
    <property type="match status" value="1"/>
</dbReference>
<dbReference type="NCBIfam" id="NF001490">
    <property type="entry name" value="PRK00346.1-4"/>
    <property type="match status" value="1"/>
</dbReference>
<dbReference type="NCBIfam" id="TIGR00087">
    <property type="entry name" value="surE"/>
    <property type="match status" value="1"/>
</dbReference>
<dbReference type="PANTHER" id="PTHR30457">
    <property type="entry name" value="5'-NUCLEOTIDASE SURE"/>
    <property type="match status" value="1"/>
</dbReference>
<dbReference type="PANTHER" id="PTHR30457:SF12">
    <property type="entry name" value="5'_3'-NUCLEOTIDASE SURE"/>
    <property type="match status" value="1"/>
</dbReference>
<dbReference type="Pfam" id="PF01975">
    <property type="entry name" value="SurE"/>
    <property type="match status" value="1"/>
</dbReference>
<dbReference type="SUPFAM" id="SSF64167">
    <property type="entry name" value="SurE-like"/>
    <property type="match status" value="1"/>
</dbReference>
<feature type="chain" id="PRO_1000007760" description="5'-nucleotidase SurE">
    <location>
        <begin position="1"/>
        <end position="261"/>
    </location>
</feature>
<feature type="binding site" evidence="1">
    <location>
        <position position="8"/>
    </location>
    <ligand>
        <name>a divalent metal cation</name>
        <dbReference type="ChEBI" id="CHEBI:60240"/>
    </ligand>
</feature>
<feature type="binding site" evidence="1">
    <location>
        <position position="9"/>
    </location>
    <ligand>
        <name>a divalent metal cation</name>
        <dbReference type="ChEBI" id="CHEBI:60240"/>
    </ligand>
</feature>
<feature type="binding site" evidence="1">
    <location>
        <position position="39"/>
    </location>
    <ligand>
        <name>a divalent metal cation</name>
        <dbReference type="ChEBI" id="CHEBI:60240"/>
    </ligand>
</feature>
<feature type="binding site" evidence="1">
    <location>
        <position position="91"/>
    </location>
    <ligand>
        <name>a divalent metal cation</name>
        <dbReference type="ChEBI" id="CHEBI:60240"/>
    </ligand>
</feature>